<protein>
    <recommendedName>
        <fullName evidence="1">Small ribosomal subunit protein bS20</fullName>
    </recommendedName>
    <alternativeName>
        <fullName evidence="2">30S ribosomal protein S20</fullName>
    </alternativeName>
</protein>
<comment type="function">
    <text evidence="1">Binds directly to 16S ribosomal RNA.</text>
</comment>
<comment type="similarity">
    <text evidence="1">Belongs to the bacterial ribosomal protein bS20 family.</text>
</comment>
<gene>
    <name evidence="1" type="primary">rpsT</name>
    <name type="ordered locus">LCABL_15530</name>
</gene>
<accession>B3WE33</accession>
<sequence>MPQIKSAIKRVKTQEAARVRNIAQMNAMRTAVKKFKTATEQNADNSQDLYKAAARAIDMANSKGLIKKNKAGRDKSRLSALLNK</sequence>
<organism>
    <name type="scientific">Lacticaseibacillus casei (strain BL23)</name>
    <name type="common">Lactobacillus casei</name>
    <dbReference type="NCBI Taxonomy" id="543734"/>
    <lineage>
        <taxon>Bacteria</taxon>
        <taxon>Bacillati</taxon>
        <taxon>Bacillota</taxon>
        <taxon>Bacilli</taxon>
        <taxon>Lactobacillales</taxon>
        <taxon>Lactobacillaceae</taxon>
        <taxon>Lacticaseibacillus</taxon>
    </lineage>
</organism>
<name>RS20_LACCB</name>
<feature type="chain" id="PRO_1000126462" description="Small ribosomal subunit protein bS20">
    <location>
        <begin position="1"/>
        <end position="84"/>
    </location>
</feature>
<evidence type="ECO:0000255" key="1">
    <source>
        <dbReference type="HAMAP-Rule" id="MF_00500"/>
    </source>
</evidence>
<evidence type="ECO:0000305" key="2"/>
<keyword id="KW-0687">Ribonucleoprotein</keyword>
<keyword id="KW-0689">Ribosomal protein</keyword>
<keyword id="KW-0694">RNA-binding</keyword>
<keyword id="KW-0699">rRNA-binding</keyword>
<reference key="1">
    <citation type="submission" date="2008-06" db="EMBL/GenBank/DDBJ databases">
        <title>Lactobacillus casei BL23 complete genome sequence.</title>
        <authorList>
            <person name="Maze A."/>
            <person name="Boel G."/>
            <person name="Bourand A."/>
            <person name="Loux V."/>
            <person name="Gibrat J.F."/>
            <person name="Zuniga M."/>
            <person name="Hartke A."/>
            <person name="Deutscher J."/>
        </authorList>
    </citation>
    <scope>NUCLEOTIDE SEQUENCE [LARGE SCALE GENOMIC DNA]</scope>
    <source>
        <strain>BL23</strain>
    </source>
</reference>
<dbReference type="EMBL" id="FM177140">
    <property type="protein sequence ID" value="CAQ66634.1"/>
    <property type="molecule type" value="Genomic_DNA"/>
</dbReference>
<dbReference type="SMR" id="B3WE33"/>
<dbReference type="KEGG" id="lcb:LCABL_15530"/>
<dbReference type="HOGENOM" id="CLU_160655_1_1_9"/>
<dbReference type="GO" id="GO:0005829">
    <property type="term" value="C:cytosol"/>
    <property type="evidence" value="ECO:0007669"/>
    <property type="project" value="TreeGrafter"/>
</dbReference>
<dbReference type="GO" id="GO:0015935">
    <property type="term" value="C:small ribosomal subunit"/>
    <property type="evidence" value="ECO:0007669"/>
    <property type="project" value="TreeGrafter"/>
</dbReference>
<dbReference type="GO" id="GO:0070181">
    <property type="term" value="F:small ribosomal subunit rRNA binding"/>
    <property type="evidence" value="ECO:0007669"/>
    <property type="project" value="TreeGrafter"/>
</dbReference>
<dbReference type="GO" id="GO:0003735">
    <property type="term" value="F:structural constituent of ribosome"/>
    <property type="evidence" value="ECO:0007669"/>
    <property type="project" value="InterPro"/>
</dbReference>
<dbReference type="GO" id="GO:0006412">
    <property type="term" value="P:translation"/>
    <property type="evidence" value="ECO:0007669"/>
    <property type="project" value="UniProtKB-UniRule"/>
</dbReference>
<dbReference type="Gene3D" id="1.20.58.110">
    <property type="entry name" value="Ribosomal protein S20"/>
    <property type="match status" value="1"/>
</dbReference>
<dbReference type="HAMAP" id="MF_00500">
    <property type="entry name" value="Ribosomal_bS20"/>
    <property type="match status" value="1"/>
</dbReference>
<dbReference type="InterPro" id="IPR002583">
    <property type="entry name" value="Ribosomal_bS20"/>
</dbReference>
<dbReference type="InterPro" id="IPR036510">
    <property type="entry name" value="Ribosomal_bS20_sf"/>
</dbReference>
<dbReference type="NCBIfam" id="TIGR00029">
    <property type="entry name" value="S20"/>
    <property type="match status" value="1"/>
</dbReference>
<dbReference type="PANTHER" id="PTHR33398">
    <property type="entry name" value="30S RIBOSOMAL PROTEIN S20"/>
    <property type="match status" value="1"/>
</dbReference>
<dbReference type="PANTHER" id="PTHR33398:SF1">
    <property type="entry name" value="SMALL RIBOSOMAL SUBUNIT PROTEIN BS20C"/>
    <property type="match status" value="1"/>
</dbReference>
<dbReference type="Pfam" id="PF01649">
    <property type="entry name" value="Ribosomal_S20p"/>
    <property type="match status" value="1"/>
</dbReference>
<dbReference type="SUPFAM" id="SSF46992">
    <property type="entry name" value="Ribosomal protein S20"/>
    <property type="match status" value="1"/>
</dbReference>
<proteinExistence type="inferred from homology"/>